<organism>
    <name type="scientific">Bacillus anthracis</name>
    <dbReference type="NCBI Taxonomy" id="1392"/>
    <lineage>
        <taxon>Bacteria</taxon>
        <taxon>Bacillati</taxon>
        <taxon>Bacillota</taxon>
        <taxon>Bacilli</taxon>
        <taxon>Bacillales</taxon>
        <taxon>Bacillaceae</taxon>
        <taxon>Bacillus</taxon>
        <taxon>Bacillus cereus group</taxon>
    </lineage>
</organism>
<keyword id="KW-0456">Lyase</keyword>
<keyword id="KW-0479">Metal-binding</keyword>
<keyword id="KW-1185">Reference proteome</keyword>
<proteinExistence type="inferred from homology"/>
<dbReference type="EC" id="4.1.3.17"/>
<dbReference type="EC" id="4.1.1.112"/>
<dbReference type="EMBL" id="AE016879">
    <property type="protein sequence ID" value="AAP27140.1"/>
    <property type="molecule type" value="Genomic_DNA"/>
</dbReference>
<dbReference type="EMBL" id="AE017334">
    <property type="protein sequence ID" value="AAT32476.1"/>
    <property type="molecule type" value="Genomic_DNA"/>
</dbReference>
<dbReference type="EMBL" id="AE017225">
    <property type="protein sequence ID" value="AAT55430.1"/>
    <property type="molecule type" value="Genomic_DNA"/>
</dbReference>
<dbReference type="RefSeq" id="NP_845654.1">
    <property type="nucleotide sequence ID" value="NC_003997.3"/>
</dbReference>
<dbReference type="RefSeq" id="YP_029379.1">
    <property type="nucleotide sequence ID" value="NC_005945.1"/>
</dbReference>
<dbReference type="SMR" id="Q81N49"/>
<dbReference type="STRING" id="261594.GBAA_3368"/>
<dbReference type="DNASU" id="1084707"/>
<dbReference type="GeneID" id="45023124"/>
<dbReference type="KEGG" id="ban:BA_3368"/>
<dbReference type="KEGG" id="bar:GBAA_3368"/>
<dbReference type="KEGG" id="bat:BAS3122"/>
<dbReference type="PATRIC" id="fig|198094.11.peg.3343"/>
<dbReference type="eggNOG" id="COG0684">
    <property type="taxonomic scope" value="Bacteria"/>
</dbReference>
<dbReference type="HOGENOM" id="CLU_072626_4_0_9"/>
<dbReference type="OMA" id="RSCDTQF"/>
<dbReference type="OrthoDB" id="9784786at2"/>
<dbReference type="Proteomes" id="UP000000427">
    <property type="component" value="Chromosome"/>
</dbReference>
<dbReference type="Proteomes" id="UP000000594">
    <property type="component" value="Chromosome"/>
</dbReference>
<dbReference type="GO" id="GO:0047443">
    <property type="term" value="F:4-hydroxy-4-methyl-2-oxoglutarate aldolase activity"/>
    <property type="evidence" value="ECO:0007669"/>
    <property type="project" value="UniProtKB-EC"/>
</dbReference>
<dbReference type="GO" id="GO:0046872">
    <property type="term" value="F:metal ion binding"/>
    <property type="evidence" value="ECO:0007669"/>
    <property type="project" value="UniProtKB-KW"/>
</dbReference>
<dbReference type="GO" id="GO:0008948">
    <property type="term" value="F:oxaloacetate decarboxylase activity"/>
    <property type="evidence" value="ECO:0007669"/>
    <property type="project" value="UniProtKB-EC"/>
</dbReference>
<dbReference type="GO" id="GO:0008428">
    <property type="term" value="F:ribonuclease inhibitor activity"/>
    <property type="evidence" value="ECO:0007669"/>
    <property type="project" value="InterPro"/>
</dbReference>
<dbReference type="GO" id="GO:0051252">
    <property type="term" value="P:regulation of RNA metabolic process"/>
    <property type="evidence" value="ECO:0007669"/>
    <property type="project" value="InterPro"/>
</dbReference>
<dbReference type="CDD" id="cd16841">
    <property type="entry name" value="RraA_family"/>
    <property type="match status" value="1"/>
</dbReference>
<dbReference type="Gene3D" id="3.50.30.40">
    <property type="entry name" value="Ribonuclease E inhibitor RraA/RraA-like"/>
    <property type="match status" value="1"/>
</dbReference>
<dbReference type="InterPro" id="IPR010203">
    <property type="entry name" value="RraA"/>
</dbReference>
<dbReference type="InterPro" id="IPR005493">
    <property type="entry name" value="RraA/RraA-like"/>
</dbReference>
<dbReference type="InterPro" id="IPR036704">
    <property type="entry name" value="RraA/RraA-like_sf"/>
</dbReference>
<dbReference type="NCBIfam" id="TIGR01935">
    <property type="entry name" value="NOT-MenG"/>
    <property type="match status" value="1"/>
</dbReference>
<dbReference type="NCBIfam" id="NF006875">
    <property type="entry name" value="PRK09372.1"/>
    <property type="match status" value="1"/>
</dbReference>
<dbReference type="PANTHER" id="PTHR33254">
    <property type="entry name" value="4-HYDROXY-4-METHYL-2-OXOGLUTARATE ALDOLASE 3-RELATED"/>
    <property type="match status" value="1"/>
</dbReference>
<dbReference type="PANTHER" id="PTHR33254:SF4">
    <property type="entry name" value="4-HYDROXY-4-METHYL-2-OXOGLUTARATE ALDOLASE 3-RELATED"/>
    <property type="match status" value="1"/>
</dbReference>
<dbReference type="Pfam" id="PF03737">
    <property type="entry name" value="RraA-like"/>
    <property type="match status" value="1"/>
</dbReference>
<dbReference type="SUPFAM" id="SSF89562">
    <property type="entry name" value="RraA-like"/>
    <property type="match status" value="1"/>
</dbReference>
<sequence>MWKTTDLCDEFENELQICRQPFRSFGKKEQFHGKIATVKVKDDNVLVKEGLQTLPEGTVLVVDGGASTNCALLGDNLAAIAEERKLAGIIVNGYVRDSSELKNINIGILALGTMPNRSVKEGKGERNISLQFGQVEWKPDEYVYVDEDGVIISDKSLHR</sequence>
<reference key="1">
    <citation type="journal article" date="2003" name="Nature">
        <title>The genome sequence of Bacillus anthracis Ames and comparison to closely related bacteria.</title>
        <authorList>
            <person name="Read T.D."/>
            <person name="Peterson S.N."/>
            <person name="Tourasse N.J."/>
            <person name="Baillie L.W."/>
            <person name="Paulsen I.T."/>
            <person name="Nelson K.E."/>
            <person name="Tettelin H."/>
            <person name="Fouts D.E."/>
            <person name="Eisen J.A."/>
            <person name="Gill S.R."/>
            <person name="Holtzapple E.K."/>
            <person name="Okstad O.A."/>
            <person name="Helgason E."/>
            <person name="Rilstone J."/>
            <person name="Wu M."/>
            <person name="Kolonay J.F."/>
            <person name="Beanan M.J."/>
            <person name="Dodson R.J."/>
            <person name="Brinkac L.M."/>
            <person name="Gwinn M.L."/>
            <person name="DeBoy R.T."/>
            <person name="Madpu R."/>
            <person name="Daugherty S.C."/>
            <person name="Durkin A.S."/>
            <person name="Haft D.H."/>
            <person name="Nelson W.C."/>
            <person name="Peterson J.D."/>
            <person name="Pop M."/>
            <person name="Khouri H.M."/>
            <person name="Radune D."/>
            <person name="Benton J.L."/>
            <person name="Mahamoud Y."/>
            <person name="Jiang L."/>
            <person name="Hance I.R."/>
            <person name="Weidman J.F."/>
            <person name="Berry K.J."/>
            <person name="Plaut R.D."/>
            <person name="Wolf A.M."/>
            <person name="Watkins K.L."/>
            <person name="Nierman W.C."/>
            <person name="Hazen A."/>
            <person name="Cline R.T."/>
            <person name="Redmond C."/>
            <person name="Thwaite J.E."/>
            <person name="White O."/>
            <person name="Salzberg S.L."/>
            <person name="Thomason B."/>
            <person name="Friedlander A.M."/>
            <person name="Koehler T.M."/>
            <person name="Hanna P.C."/>
            <person name="Kolstoe A.-B."/>
            <person name="Fraser C.M."/>
        </authorList>
    </citation>
    <scope>NUCLEOTIDE SEQUENCE [LARGE SCALE GENOMIC DNA]</scope>
    <source>
        <strain>Ames / isolate Porton</strain>
    </source>
</reference>
<reference key="2">
    <citation type="journal article" date="2009" name="J. Bacteriol.">
        <title>The complete genome sequence of Bacillus anthracis Ames 'Ancestor'.</title>
        <authorList>
            <person name="Ravel J."/>
            <person name="Jiang L."/>
            <person name="Stanley S.T."/>
            <person name="Wilson M.R."/>
            <person name="Decker R.S."/>
            <person name="Read T.D."/>
            <person name="Worsham P."/>
            <person name="Keim P.S."/>
            <person name="Salzberg S.L."/>
            <person name="Fraser-Liggett C.M."/>
            <person name="Rasko D.A."/>
        </authorList>
    </citation>
    <scope>NUCLEOTIDE SEQUENCE [LARGE SCALE GENOMIC DNA]</scope>
    <source>
        <strain>Ames ancestor</strain>
    </source>
</reference>
<reference key="3">
    <citation type="submission" date="2004-01" db="EMBL/GenBank/DDBJ databases">
        <title>Complete genome sequence of Bacillus anthracis Sterne.</title>
        <authorList>
            <person name="Brettin T.S."/>
            <person name="Bruce D."/>
            <person name="Challacombe J.F."/>
            <person name="Gilna P."/>
            <person name="Han C."/>
            <person name="Hill K."/>
            <person name="Hitchcock P."/>
            <person name="Jackson P."/>
            <person name="Keim P."/>
            <person name="Longmire J."/>
            <person name="Lucas S."/>
            <person name="Okinaka R."/>
            <person name="Richardson P."/>
            <person name="Rubin E."/>
            <person name="Tice H."/>
        </authorList>
    </citation>
    <scope>NUCLEOTIDE SEQUENCE [LARGE SCALE GENOMIC DNA]</scope>
    <source>
        <strain>Sterne</strain>
    </source>
</reference>
<name>RRAAH_BACAN</name>
<feature type="chain" id="PRO_0000209602" description="Putative 4-hydroxy-4-methyl-2-oxoglutarate aldolase">
    <location>
        <begin position="1"/>
        <end position="159"/>
    </location>
</feature>
<feature type="binding site" evidence="1">
    <location>
        <begin position="74"/>
        <end position="77"/>
    </location>
    <ligand>
        <name>substrate</name>
    </ligand>
</feature>
<feature type="binding site" evidence="1">
    <location>
        <position position="96"/>
    </location>
    <ligand>
        <name>substrate</name>
    </ligand>
</feature>
<feature type="binding site" evidence="1">
    <location>
        <position position="97"/>
    </location>
    <ligand>
        <name>a divalent metal cation</name>
        <dbReference type="ChEBI" id="CHEBI:60240"/>
    </ligand>
</feature>
<protein>
    <recommendedName>
        <fullName>Putative 4-hydroxy-4-methyl-2-oxoglutarate aldolase</fullName>
        <shortName>HMG aldolase</shortName>
        <ecNumber>4.1.3.17</ecNumber>
    </recommendedName>
    <alternativeName>
        <fullName>Oxaloacetate decarboxylase</fullName>
        <shortName>OAA decarboxylase</shortName>
        <ecNumber>4.1.1.112</ecNumber>
    </alternativeName>
    <alternativeName>
        <fullName>Regulator of ribonuclease activity homolog</fullName>
    </alternativeName>
    <alternativeName>
        <fullName>RraA-like protein</fullName>
    </alternativeName>
</protein>
<evidence type="ECO:0000250" key="1"/>
<evidence type="ECO:0000305" key="2"/>
<gene>
    <name type="ordered locus">BA_3368</name>
    <name type="ordered locus">GBAA_3368</name>
    <name type="ordered locus">BAS3122</name>
</gene>
<accession>Q81N49</accession>
<accession>Q6HWA9</accession>
<accession>Q6KQG0</accession>
<comment type="function">
    <text evidence="1">Catalyzes the aldol cleavage of 4-hydroxy-4-methyl-2-oxoglutarate (HMG) into 2 molecules of pyruvate. Also contains a secondary oxaloacetate (OAA) decarboxylase activity due to the common pyruvate enolate transition state formed following C-C bond cleavage in the retro-aldol and decarboxylation reactions (By similarity).</text>
</comment>
<comment type="catalytic activity">
    <reaction>
        <text>4-hydroxy-4-methyl-2-oxoglutarate = 2 pyruvate</text>
        <dbReference type="Rhea" id="RHEA:22748"/>
        <dbReference type="ChEBI" id="CHEBI:15361"/>
        <dbReference type="ChEBI" id="CHEBI:58276"/>
        <dbReference type="EC" id="4.1.3.17"/>
    </reaction>
</comment>
<comment type="catalytic activity">
    <reaction>
        <text>oxaloacetate + H(+) = pyruvate + CO2</text>
        <dbReference type="Rhea" id="RHEA:15641"/>
        <dbReference type="ChEBI" id="CHEBI:15361"/>
        <dbReference type="ChEBI" id="CHEBI:15378"/>
        <dbReference type="ChEBI" id="CHEBI:16452"/>
        <dbReference type="ChEBI" id="CHEBI:16526"/>
        <dbReference type="EC" id="4.1.1.112"/>
    </reaction>
</comment>
<comment type="cofactor">
    <cofactor evidence="1">
        <name>a divalent metal cation</name>
        <dbReference type="ChEBI" id="CHEBI:60240"/>
    </cofactor>
    <text evidence="1">Divalent metal cation.</text>
</comment>
<comment type="subunit">
    <text evidence="1">Homotrimer.</text>
</comment>
<comment type="similarity">
    <text evidence="2">Belongs to the class II aldolase/RraA-like family.</text>
</comment>